<proteinExistence type="inferred from homology"/>
<dbReference type="EMBL" id="FO081767">
    <property type="protein sequence ID" value="CCD74274.1"/>
    <property type="molecule type" value="Genomic_DNA"/>
</dbReference>
<dbReference type="PIR" id="C88923">
    <property type="entry name" value="C88923"/>
</dbReference>
<dbReference type="RefSeq" id="NP_503138.1">
    <property type="nucleotide sequence ID" value="NM_070737.5"/>
</dbReference>
<dbReference type="SMR" id="O16999"/>
<dbReference type="BioGRID" id="53812">
    <property type="interactions" value="2"/>
</dbReference>
<dbReference type="FunCoup" id="O16999">
    <property type="interactions" value="3051"/>
</dbReference>
<dbReference type="IntAct" id="O16999">
    <property type="interactions" value="1"/>
</dbReference>
<dbReference type="STRING" id="6239.W03F9.1a.1"/>
<dbReference type="PaxDb" id="6239-W03F9.1"/>
<dbReference type="PeptideAtlas" id="O16999"/>
<dbReference type="EnsemblMetazoa" id="W03F9.1a.1">
    <property type="protein sequence ID" value="W03F9.1a.1"/>
    <property type="gene ID" value="WBGene00020999"/>
</dbReference>
<dbReference type="GeneID" id="189162"/>
<dbReference type="KEGG" id="cel:CELE_W03F9.1"/>
<dbReference type="UCSC" id="W03F9.1">
    <property type="organism name" value="c. elegans"/>
</dbReference>
<dbReference type="AGR" id="WB:WBGene00020999"/>
<dbReference type="CTD" id="189162"/>
<dbReference type="WormBase" id="W03F9.1a">
    <property type="protein sequence ID" value="CE21254"/>
    <property type="gene ID" value="WBGene00020999"/>
</dbReference>
<dbReference type="eggNOG" id="KOG2703">
    <property type="taxonomic scope" value="Eukaryota"/>
</dbReference>
<dbReference type="GeneTree" id="ENSGT00390000005306"/>
<dbReference type="HOGENOM" id="CLU_024138_5_0_1"/>
<dbReference type="InParanoid" id="O16999"/>
<dbReference type="OMA" id="FREVVIM"/>
<dbReference type="OrthoDB" id="308464at2759"/>
<dbReference type="PhylomeDB" id="O16999"/>
<dbReference type="PRO" id="PR:O16999"/>
<dbReference type="Proteomes" id="UP000001940">
    <property type="component" value="Chromosome V"/>
</dbReference>
<dbReference type="Bgee" id="WBGene00020999">
    <property type="expression patterns" value="Expressed in adult organism and 4 other cell types or tissues"/>
</dbReference>
<dbReference type="ExpressionAtlas" id="O16999">
    <property type="expression patterns" value="baseline and differential"/>
</dbReference>
<dbReference type="GO" id="GO:0005737">
    <property type="term" value="C:cytoplasm"/>
    <property type="evidence" value="ECO:0000318"/>
    <property type="project" value="GO_Central"/>
</dbReference>
<dbReference type="GO" id="GO:0005783">
    <property type="term" value="C:endoplasmic reticulum"/>
    <property type="evidence" value="ECO:0007005"/>
    <property type="project" value="WormBase"/>
</dbReference>
<dbReference type="GO" id="GO:0005634">
    <property type="term" value="C:nucleus"/>
    <property type="evidence" value="ECO:0000318"/>
    <property type="project" value="GO_Central"/>
</dbReference>
<dbReference type="GO" id="GO:0030017">
    <property type="term" value="C:sarcomere"/>
    <property type="evidence" value="ECO:0007005"/>
    <property type="project" value="WormBase"/>
</dbReference>
<dbReference type="GO" id="GO:0055120">
    <property type="term" value="C:striated muscle dense body"/>
    <property type="evidence" value="ECO:0007005"/>
    <property type="project" value="WormBase"/>
</dbReference>
<dbReference type="GO" id="GO:0044183">
    <property type="term" value="F:protein folding chaperone"/>
    <property type="evidence" value="ECO:0000250"/>
    <property type="project" value="UniProtKB"/>
</dbReference>
<dbReference type="GO" id="GO:0008270">
    <property type="term" value="F:zinc ion binding"/>
    <property type="evidence" value="ECO:0007669"/>
    <property type="project" value="UniProtKB-KW"/>
</dbReference>
<dbReference type="GO" id="GO:0006457">
    <property type="term" value="P:protein folding"/>
    <property type="evidence" value="ECO:0000250"/>
    <property type="project" value="UniProtKB"/>
</dbReference>
<dbReference type="FunFam" id="2.60.120.1040:FF:000007">
    <property type="entry name" value="Protein CBG06449"/>
    <property type="match status" value="1"/>
</dbReference>
<dbReference type="FunFam" id="2.20.25.420:FF:000001">
    <property type="entry name" value="Zinc finger protein ZPR1"/>
    <property type="match status" value="1"/>
</dbReference>
<dbReference type="FunFam" id="2.20.25.420:FF:000002">
    <property type="entry name" value="Zinc finger protein ZPR1"/>
    <property type="match status" value="1"/>
</dbReference>
<dbReference type="FunFam" id="2.60.120.1040:FF:000001">
    <property type="entry name" value="Zinc finger protein ZPR1"/>
    <property type="match status" value="1"/>
</dbReference>
<dbReference type="Gene3D" id="2.60.120.1040">
    <property type="entry name" value="ZPR1, A/B domain"/>
    <property type="match status" value="2"/>
</dbReference>
<dbReference type="Gene3D" id="2.20.25.420">
    <property type="entry name" value="ZPR1, zinc finger domain"/>
    <property type="match status" value="2"/>
</dbReference>
<dbReference type="InterPro" id="IPR004457">
    <property type="entry name" value="Znf_ZPR1"/>
</dbReference>
<dbReference type="InterPro" id="IPR040141">
    <property type="entry name" value="ZPR1"/>
</dbReference>
<dbReference type="InterPro" id="IPR042451">
    <property type="entry name" value="ZPR1_A/B_dom"/>
</dbReference>
<dbReference type="InterPro" id="IPR056180">
    <property type="entry name" value="ZPR1_jr_dom"/>
</dbReference>
<dbReference type="InterPro" id="IPR042452">
    <property type="entry name" value="ZPR1_Znf1/2"/>
</dbReference>
<dbReference type="NCBIfam" id="TIGR00310">
    <property type="entry name" value="ZPR1_znf"/>
    <property type="match status" value="2"/>
</dbReference>
<dbReference type="PANTHER" id="PTHR10876">
    <property type="entry name" value="ZINC FINGER PROTEIN ZPR1"/>
    <property type="match status" value="1"/>
</dbReference>
<dbReference type="PANTHER" id="PTHR10876:SF0">
    <property type="entry name" value="ZINC FINGER PROTEIN ZPR1"/>
    <property type="match status" value="1"/>
</dbReference>
<dbReference type="Pfam" id="PF22794">
    <property type="entry name" value="jr-ZPR1"/>
    <property type="match status" value="2"/>
</dbReference>
<dbReference type="Pfam" id="PF03367">
    <property type="entry name" value="Zn_ribbon_ZPR1"/>
    <property type="match status" value="2"/>
</dbReference>
<dbReference type="SMART" id="SM00709">
    <property type="entry name" value="Zpr1"/>
    <property type="match status" value="2"/>
</dbReference>
<protein>
    <recommendedName>
        <fullName>Zinc finger protein ZPR1 homolog</fullName>
    </recommendedName>
</protein>
<accession>O16999</accession>
<keyword id="KW-0479">Metal-binding</keyword>
<keyword id="KW-0539">Nucleus</keyword>
<keyword id="KW-1185">Reference proteome</keyword>
<keyword id="KW-0677">Repeat</keyword>
<keyword id="KW-0862">Zinc</keyword>
<keyword id="KW-0863">Zinc-finger</keyword>
<evidence type="ECO:0000305" key="1"/>
<comment type="subcellular location">
    <subcellularLocation>
        <location evidence="1">Nucleus</location>
    </subcellularLocation>
</comment>
<comment type="similarity">
    <text evidence="1">Belongs to the ZPR1 family.</text>
</comment>
<gene>
    <name type="ORF">W03F9.1</name>
</gene>
<reference key="1">
    <citation type="journal article" date="1998" name="Science">
        <title>Genome sequence of the nematode C. elegans: a platform for investigating biology.</title>
        <authorList>
            <consortium name="The C. elegans sequencing consortium"/>
        </authorList>
    </citation>
    <scope>NUCLEOTIDE SEQUENCE [LARGE SCALE GENOMIC DNA]</scope>
    <source>
        <strain>Bristol N2</strain>
    </source>
</reference>
<name>ZPR1_CAEEL</name>
<organism>
    <name type="scientific">Caenorhabditis elegans</name>
    <dbReference type="NCBI Taxonomy" id="6239"/>
    <lineage>
        <taxon>Eukaryota</taxon>
        <taxon>Metazoa</taxon>
        <taxon>Ecdysozoa</taxon>
        <taxon>Nematoda</taxon>
        <taxon>Chromadorea</taxon>
        <taxon>Rhabditida</taxon>
        <taxon>Rhabditina</taxon>
        <taxon>Rhabditomorpha</taxon>
        <taxon>Rhabditoidea</taxon>
        <taxon>Rhabditidae</taxon>
        <taxon>Peloderinae</taxon>
        <taxon>Caenorhabditis</taxon>
    </lineage>
</organism>
<feature type="chain" id="PRO_0000119038" description="Zinc finger protein ZPR1 homolog">
    <location>
        <begin position="1"/>
        <end position="455"/>
    </location>
</feature>
<feature type="zinc finger region" description="C4-type 1">
    <location>
        <begin position="28"/>
        <end position="60"/>
    </location>
</feature>
<feature type="zinc finger region" description="C4-type 2">
    <location>
        <begin position="247"/>
        <end position="279"/>
    </location>
</feature>
<sequence>MAADSQDIYRNLSADDYEAAPIVVDSVCPVCEEDGETRIMCTSIPYYRAVILMSFECPHCGHKNNEIQSGEAVQEHGTLIVLRVQKPEDLRRQLVKSEYASIEVPELQLEIPHKSQPGEVTTVEGVLERVHRGLSQDQEKRRLLDPEGASQIDAYLQKITSCMELGETWTLRLRDPTGNCYIQNPDVRHVDPRCIISHYHRNLDERKLLALADDNEEEEEVEPSAAAPEFKSYEDAKQEVLHFATDCPNCHGPTEVKMKPTDIPFFQTVIIMSLACDRCGYKSNEVKSGGAIRDQGCRMSVKLEKDLDLARDVLKTDTCALSIPEIDLEVGGNALCGRFTTIEGLLTATKEQLDAQSSFFMGDSAQTGEKSAVTTFLEKLDDIIALRLPATIILDDPTGCSYVQSLTAPMDDPRLTKEFYTRTYEQNDELGINDMKVENYGELDALAEEDEPHEA</sequence>